<reference key="1">
    <citation type="journal article" date="1998" name="Nature">
        <title>Deciphering the biology of Mycobacterium tuberculosis from the complete genome sequence.</title>
        <authorList>
            <person name="Cole S.T."/>
            <person name="Brosch R."/>
            <person name="Parkhill J."/>
            <person name="Garnier T."/>
            <person name="Churcher C.M."/>
            <person name="Harris D.E."/>
            <person name="Gordon S.V."/>
            <person name="Eiglmeier K."/>
            <person name="Gas S."/>
            <person name="Barry C.E. III"/>
            <person name="Tekaia F."/>
            <person name="Badcock K."/>
            <person name="Basham D."/>
            <person name="Brown D."/>
            <person name="Chillingworth T."/>
            <person name="Connor R."/>
            <person name="Davies R.M."/>
            <person name="Devlin K."/>
            <person name="Feltwell T."/>
            <person name="Gentles S."/>
            <person name="Hamlin N."/>
            <person name="Holroyd S."/>
            <person name="Hornsby T."/>
            <person name="Jagels K."/>
            <person name="Krogh A."/>
            <person name="McLean J."/>
            <person name="Moule S."/>
            <person name="Murphy L.D."/>
            <person name="Oliver S."/>
            <person name="Osborne J."/>
            <person name="Quail M.A."/>
            <person name="Rajandream M.A."/>
            <person name="Rogers J."/>
            <person name="Rutter S."/>
            <person name="Seeger K."/>
            <person name="Skelton S."/>
            <person name="Squares S."/>
            <person name="Squares R."/>
            <person name="Sulston J.E."/>
            <person name="Taylor K."/>
            <person name="Whitehead S."/>
            <person name="Barrell B.G."/>
        </authorList>
    </citation>
    <scope>NUCLEOTIDE SEQUENCE [LARGE SCALE GENOMIC DNA]</scope>
    <source>
        <strain>ATCC 25618 / H37Rv</strain>
    </source>
</reference>
<reference key="2">
    <citation type="journal article" date="2011" name="Mol. Cell. Proteomics">
        <title>Proteogenomic analysis of Mycobacterium tuberculosis by high resolution mass spectrometry.</title>
        <authorList>
            <person name="Kelkar D.S."/>
            <person name="Kumar D."/>
            <person name="Kumar P."/>
            <person name="Balakrishnan L."/>
            <person name="Muthusamy B."/>
            <person name="Yadav A.K."/>
            <person name="Shrivastava P."/>
            <person name="Marimuthu A."/>
            <person name="Anand S."/>
            <person name="Sundaram H."/>
            <person name="Kingsbury R."/>
            <person name="Harsha H.C."/>
            <person name="Nair B."/>
            <person name="Prasad T.S."/>
            <person name="Chauhan D.S."/>
            <person name="Katoch K."/>
            <person name="Katoch V.M."/>
            <person name="Kumar P."/>
            <person name="Chaerkady R."/>
            <person name="Ramachandran S."/>
            <person name="Dash D."/>
            <person name="Pandey A."/>
        </authorList>
    </citation>
    <scope>IDENTIFICATION BY MASS SPECTROMETRY [LARGE SCALE ANALYSIS]</scope>
    <source>
        <strain>ATCC 25618 / H37Rv</strain>
    </source>
</reference>
<protein>
    <recommendedName>
        <fullName>Haloalkane dehalogenase 2</fullName>
        <ecNumber>3.8.1.5</ecNumber>
    </recommendedName>
</protein>
<keyword id="KW-0378">Hydrolase</keyword>
<keyword id="KW-1185">Reference proteome</keyword>
<dbReference type="EC" id="3.8.1.5"/>
<dbReference type="EMBL" id="AL123456">
    <property type="protein sequence ID" value="CCP44599.1"/>
    <property type="molecule type" value="Genomic_DNA"/>
</dbReference>
<dbReference type="PIR" id="B70722">
    <property type="entry name" value="B70722"/>
</dbReference>
<dbReference type="RefSeq" id="NP_216349.1">
    <property type="nucleotide sequence ID" value="NC_000962.3"/>
</dbReference>
<dbReference type="RefSeq" id="WP_003409254.1">
    <property type="nucleotide sequence ID" value="NZ_NVQJ01000013.1"/>
</dbReference>
<dbReference type="SMR" id="P9WMS1"/>
<dbReference type="STRING" id="83332.Rv1833c"/>
<dbReference type="ESTHER" id="myctu-Rv1833c">
    <property type="family name" value="Haloalkane_dehalogenase-HLD1"/>
</dbReference>
<dbReference type="PaxDb" id="83332-Rv1833c"/>
<dbReference type="DNASU" id="885737"/>
<dbReference type="GeneID" id="885737"/>
<dbReference type="KEGG" id="mtu:Rv1833c"/>
<dbReference type="KEGG" id="mtv:RVBD_1833c"/>
<dbReference type="TubercuList" id="Rv1833c"/>
<dbReference type="eggNOG" id="COG0596">
    <property type="taxonomic scope" value="Bacteria"/>
</dbReference>
<dbReference type="InParanoid" id="P9WMS1"/>
<dbReference type="OrthoDB" id="812569at2"/>
<dbReference type="PhylomeDB" id="P9WMS1"/>
<dbReference type="Proteomes" id="UP000001584">
    <property type="component" value="Chromosome"/>
</dbReference>
<dbReference type="GO" id="GO:0005576">
    <property type="term" value="C:extracellular region"/>
    <property type="evidence" value="ECO:0007005"/>
    <property type="project" value="MTBBASE"/>
</dbReference>
<dbReference type="GO" id="GO:0016020">
    <property type="term" value="C:membrane"/>
    <property type="evidence" value="ECO:0000318"/>
    <property type="project" value="GO_Central"/>
</dbReference>
<dbReference type="GO" id="GO:0005886">
    <property type="term" value="C:plasma membrane"/>
    <property type="evidence" value="ECO:0007005"/>
    <property type="project" value="MTBBASE"/>
</dbReference>
<dbReference type="GO" id="GO:0018786">
    <property type="term" value="F:haloalkane dehalogenase activity"/>
    <property type="evidence" value="ECO:0007669"/>
    <property type="project" value="UniProtKB-UniRule"/>
</dbReference>
<dbReference type="Gene3D" id="3.40.50.1820">
    <property type="entry name" value="alpha/beta hydrolase"/>
    <property type="match status" value="1"/>
</dbReference>
<dbReference type="HAMAP" id="MF_01230">
    <property type="entry name" value="Haloalk_dehal_type1"/>
    <property type="match status" value="1"/>
</dbReference>
<dbReference type="InterPro" id="IPR000073">
    <property type="entry name" value="AB_hydrolase_1"/>
</dbReference>
<dbReference type="InterPro" id="IPR029058">
    <property type="entry name" value="AB_hydrolase_fold"/>
</dbReference>
<dbReference type="InterPro" id="IPR000639">
    <property type="entry name" value="Epox_hydrolase-like"/>
</dbReference>
<dbReference type="InterPro" id="IPR051340">
    <property type="entry name" value="Haloalkane_dehalogenase"/>
</dbReference>
<dbReference type="InterPro" id="IPR023489">
    <property type="entry name" value="Haloalkane_dehalogenase_1"/>
</dbReference>
<dbReference type="NCBIfam" id="NF002873">
    <property type="entry name" value="PRK03204.1"/>
    <property type="match status" value="1"/>
</dbReference>
<dbReference type="PANTHER" id="PTHR42977:SF3">
    <property type="entry name" value="AB HYDROLASE-1 DOMAIN-CONTAINING PROTEIN"/>
    <property type="match status" value="1"/>
</dbReference>
<dbReference type="PANTHER" id="PTHR42977">
    <property type="entry name" value="HYDROLASE-RELATED"/>
    <property type="match status" value="1"/>
</dbReference>
<dbReference type="Pfam" id="PF00561">
    <property type="entry name" value="Abhydrolase_1"/>
    <property type="match status" value="1"/>
</dbReference>
<dbReference type="PRINTS" id="PR00111">
    <property type="entry name" value="ABHYDROLASE"/>
</dbReference>
<dbReference type="PRINTS" id="PR00412">
    <property type="entry name" value="EPOXHYDRLASE"/>
</dbReference>
<dbReference type="SUPFAM" id="SSF53474">
    <property type="entry name" value="alpha/beta-Hydrolases"/>
    <property type="match status" value="1"/>
</dbReference>
<feature type="chain" id="PRO_0000216769" description="Haloalkane dehalogenase 2">
    <location>
        <begin position="1"/>
        <end position="286"/>
    </location>
</feature>
<feature type="domain" description="AB hydrolase-1" evidence="2">
    <location>
        <begin position="35"/>
        <end position="134"/>
    </location>
</feature>
<feature type="active site" description="Nucleophile" evidence="1">
    <location>
        <position position="109"/>
    </location>
</feature>
<feature type="active site" description="Proton donor" evidence="1">
    <location>
        <position position="238"/>
    </location>
</feature>
<feature type="active site" description="Proton acceptor" evidence="1">
    <location>
        <position position="267"/>
    </location>
</feature>
<proteinExistence type="evidence at protein level"/>
<sequence>MSIDFTPDPQLYPFESRWFDSSRGRIHYVDEGTGPPILLCHGNPTWSFLYRDIIVALRDRFRCVAPDYLGFGLSERPSGFGYQIDEHARVIGEFVDHLGLDRYLSMGQDWGGPISMAVAVERADRVRGVVLGNTWFWPADTLAMKAFSRVMSSPPVQYAILRRNFFVERLIPAGTEHRPSSAVMAHYRAVQPNAAARRGVAEMPKQILAARPLLARLAREVPATLGTKPTLLIWGMKDVAFRPKTIIPRLSATFPDHVLVELPNAKHFIQEDAPDRIAAAIIERFG</sequence>
<gene>
    <name type="primary">dhmA2</name>
    <name type="ordered locus">Rv1833c</name>
    <name type="ORF">MTCY1A11.10</name>
</gene>
<comment type="function">
    <text evidence="1">Catalyzes hydrolytic cleavage of carbon-halogen bonds in halogenated aliphatic compounds, leading to the formation of the corresponding primary alcohols, halide ions and protons.</text>
</comment>
<comment type="catalytic activity">
    <reaction>
        <text>1-haloalkane + H2O = a halide anion + a primary alcohol + H(+)</text>
        <dbReference type="Rhea" id="RHEA:19081"/>
        <dbReference type="ChEBI" id="CHEBI:15377"/>
        <dbReference type="ChEBI" id="CHEBI:15378"/>
        <dbReference type="ChEBI" id="CHEBI:15734"/>
        <dbReference type="ChEBI" id="CHEBI:16042"/>
        <dbReference type="ChEBI" id="CHEBI:18060"/>
        <dbReference type="EC" id="3.8.1.5"/>
    </reaction>
</comment>
<comment type="subunit">
    <text evidence="1">Monomer.</text>
</comment>
<comment type="similarity">
    <text evidence="3">Belongs to the haloalkane dehalogenase family. Type 1 subfamily.</text>
</comment>
<evidence type="ECO:0000250" key="1"/>
<evidence type="ECO:0000255" key="2"/>
<evidence type="ECO:0000305" key="3"/>
<organism>
    <name type="scientific">Mycobacterium tuberculosis (strain ATCC 25618 / H37Rv)</name>
    <dbReference type="NCBI Taxonomy" id="83332"/>
    <lineage>
        <taxon>Bacteria</taxon>
        <taxon>Bacillati</taxon>
        <taxon>Actinomycetota</taxon>
        <taxon>Actinomycetes</taxon>
        <taxon>Mycobacteriales</taxon>
        <taxon>Mycobacteriaceae</taxon>
        <taxon>Mycobacterium</taxon>
        <taxon>Mycobacterium tuberculosis complex</taxon>
    </lineage>
</organism>
<accession>P9WMS1</accession>
<accession>L0TAR1</accession>
<accession>P64303</accession>
<accession>Q50600</accession>
<name>DHMA2_MYCTU</name>